<gene>
    <name evidence="1" type="primary">psbF</name>
</gene>
<comment type="function">
    <text evidence="1">This b-type cytochrome is tightly associated with the reaction center of photosystem II (PSII). PSII is a light-driven water:plastoquinone oxidoreductase that uses light energy to abstract electrons from H(2)O, generating O(2) and a proton gradient subsequently used for ATP formation. It consists of a core antenna complex that captures photons, and an electron transfer chain that converts photonic excitation into a charge separation.</text>
</comment>
<comment type="cofactor">
    <cofactor evidence="1">
        <name>heme b</name>
        <dbReference type="ChEBI" id="CHEBI:60344"/>
    </cofactor>
    <text evidence="1">With its partner (PsbE) binds heme. PSII binds additional chlorophylls, carotenoids and specific lipids.</text>
</comment>
<comment type="subunit">
    <text evidence="1">Heterodimer of an alpha subunit and a beta subunit. PSII is composed of 1 copy each of membrane proteins PsbA, PsbB, PsbC, PsbD, PsbE, PsbF, PsbH, PsbI, PsbJ, PsbK, PsbL, PsbM, PsbT, PsbX, PsbY, PsbZ, Psb30/Ycf12, at least 3 peripheral proteins of the oxygen-evolving complex and a large number of cofactors. It forms dimeric complexes.</text>
</comment>
<comment type="subcellular location">
    <subcellularLocation>
        <location evidence="1">Plastid</location>
        <location evidence="1">Chloroplast thylakoid membrane</location>
        <topology evidence="1">Single-pass membrane protein</topology>
    </subcellularLocation>
</comment>
<comment type="similarity">
    <text evidence="1">Belongs to the PsbE/PsbF family.</text>
</comment>
<feature type="chain" id="PRO_0000200396" description="Cytochrome b559 subunit beta">
    <location>
        <begin position="1"/>
        <end position="39"/>
    </location>
</feature>
<feature type="transmembrane region" description="Helical" evidence="1">
    <location>
        <begin position="14"/>
        <end position="30"/>
    </location>
</feature>
<feature type="binding site" description="axial binding residue" evidence="1">
    <location>
        <position position="18"/>
    </location>
    <ligand>
        <name>heme</name>
        <dbReference type="ChEBI" id="CHEBI:30413"/>
        <note>ligand shared with alpha subunit</note>
    </ligand>
    <ligandPart>
        <name>Fe</name>
        <dbReference type="ChEBI" id="CHEBI:18248"/>
    </ligandPart>
</feature>
<reference key="1">
    <citation type="submission" date="2000-02" db="EMBL/GenBank/DDBJ databases">
        <title>Long branches in the seed plants and the root of the angiosperms.</title>
        <authorList>
            <person name="Graham S.W."/>
            <person name="Reeves P.A."/>
            <person name="Burns A."/>
            <person name="Olmstead R.G."/>
        </authorList>
    </citation>
    <scope>NUCLEOTIDE SEQUENCE [GENOMIC DNA]</scope>
</reference>
<evidence type="ECO:0000255" key="1">
    <source>
        <dbReference type="HAMAP-Rule" id="MF_00643"/>
    </source>
</evidence>
<geneLocation type="chloroplast"/>
<accession>Q7HIV1</accession>
<proteinExistence type="inferred from homology"/>
<protein>
    <recommendedName>
        <fullName evidence="1">Cytochrome b559 subunit beta</fullName>
    </recommendedName>
    <alternativeName>
        <fullName evidence="1">PSII reaction center subunit VI</fullName>
    </alternativeName>
</protein>
<sequence length="39" mass="4408">MTIDRTFPIFTVRWLAVHGLAVPTVSFLGSISAMQFIQR</sequence>
<dbReference type="EMBL" id="AY007478">
    <property type="protein sequence ID" value="AAG26995.1"/>
    <property type="molecule type" value="Genomic_DNA"/>
</dbReference>
<dbReference type="SMR" id="Q7HIV1"/>
<dbReference type="GO" id="GO:0009535">
    <property type="term" value="C:chloroplast thylakoid membrane"/>
    <property type="evidence" value="ECO:0007669"/>
    <property type="project" value="UniProtKB-SubCell"/>
</dbReference>
<dbReference type="GO" id="GO:0009539">
    <property type="term" value="C:photosystem II reaction center"/>
    <property type="evidence" value="ECO:0007669"/>
    <property type="project" value="InterPro"/>
</dbReference>
<dbReference type="GO" id="GO:0009055">
    <property type="term" value="F:electron transfer activity"/>
    <property type="evidence" value="ECO:0007669"/>
    <property type="project" value="UniProtKB-UniRule"/>
</dbReference>
<dbReference type="GO" id="GO:0020037">
    <property type="term" value="F:heme binding"/>
    <property type="evidence" value="ECO:0007669"/>
    <property type="project" value="InterPro"/>
</dbReference>
<dbReference type="GO" id="GO:0005506">
    <property type="term" value="F:iron ion binding"/>
    <property type="evidence" value="ECO:0007669"/>
    <property type="project" value="UniProtKB-UniRule"/>
</dbReference>
<dbReference type="GO" id="GO:0009767">
    <property type="term" value="P:photosynthetic electron transport chain"/>
    <property type="evidence" value="ECO:0007669"/>
    <property type="project" value="InterPro"/>
</dbReference>
<dbReference type="HAMAP" id="MF_00643">
    <property type="entry name" value="PSII_PsbF"/>
    <property type="match status" value="1"/>
</dbReference>
<dbReference type="InterPro" id="IPR006241">
    <property type="entry name" value="PSII_cyt_b559_bsu"/>
</dbReference>
<dbReference type="InterPro" id="IPR006216">
    <property type="entry name" value="PSII_cyt_b559_CS"/>
</dbReference>
<dbReference type="InterPro" id="IPR013081">
    <property type="entry name" value="PSII_cyt_b559_N"/>
</dbReference>
<dbReference type="NCBIfam" id="TIGR01333">
    <property type="entry name" value="cyt_b559_beta"/>
    <property type="match status" value="1"/>
</dbReference>
<dbReference type="Pfam" id="PF00283">
    <property type="entry name" value="Cytochrom_B559"/>
    <property type="match status" value="1"/>
</dbReference>
<dbReference type="PIRSF" id="PIRSF000037">
    <property type="entry name" value="PsbF"/>
    <property type="match status" value="1"/>
</dbReference>
<dbReference type="SUPFAM" id="SSF161045">
    <property type="entry name" value="Cytochrome b559 subunits"/>
    <property type="match status" value="1"/>
</dbReference>
<dbReference type="PROSITE" id="PS00537">
    <property type="entry name" value="CYTOCHROME_B559"/>
    <property type="match status" value="1"/>
</dbReference>
<name>PSBF_GUNCH</name>
<organism>
    <name type="scientific">Gunnera chilensis</name>
    <name type="common">Chilean rhubarb</name>
    <dbReference type="NCBI Taxonomy" id="130722"/>
    <lineage>
        <taxon>Eukaryota</taxon>
        <taxon>Viridiplantae</taxon>
        <taxon>Streptophyta</taxon>
        <taxon>Embryophyta</taxon>
        <taxon>Tracheophyta</taxon>
        <taxon>Spermatophyta</taxon>
        <taxon>Magnoliopsida</taxon>
        <taxon>eudicotyledons</taxon>
        <taxon>Gunneridae</taxon>
        <taxon>Gunnerales</taxon>
        <taxon>Gunneraceae</taxon>
        <taxon>Gunnera</taxon>
    </lineage>
</organism>
<keyword id="KW-0150">Chloroplast</keyword>
<keyword id="KW-0249">Electron transport</keyword>
<keyword id="KW-0349">Heme</keyword>
<keyword id="KW-0408">Iron</keyword>
<keyword id="KW-0472">Membrane</keyword>
<keyword id="KW-0479">Metal-binding</keyword>
<keyword id="KW-0602">Photosynthesis</keyword>
<keyword id="KW-0604">Photosystem II</keyword>
<keyword id="KW-0934">Plastid</keyword>
<keyword id="KW-0793">Thylakoid</keyword>
<keyword id="KW-0812">Transmembrane</keyword>
<keyword id="KW-1133">Transmembrane helix</keyword>
<keyword id="KW-0813">Transport</keyword>